<sequence>MQRIRKGDKVVVITGKNKGGSGIVLKVLTKQNKAIVEGINKVTVHKKEQVNKRSKQTNPTTKEAPLPLNKLALFDQKAKQQTIGKIKYQIDPKTKQKTRVFKKTNNAI</sequence>
<protein>
    <recommendedName>
        <fullName evidence="1">Large ribosomal subunit protein uL24</fullName>
    </recommendedName>
    <alternativeName>
        <fullName evidence="2">50S ribosomal protein L24</fullName>
    </alternativeName>
</protein>
<organism>
    <name type="scientific">Mycoplasma genitalium (strain ATCC 33530 / DSM 19775 / NCTC 10195 / G37)</name>
    <name type="common">Mycoplasmoides genitalium</name>
    <dbReference type="NCBI Taxonomy" id="243273"/>
    <lineage>
        <taxon>Bacteria</taxon>
        <taxon>Bacillati</taxon>
        <taxon>Mycoplasmatota</taxon>
        <taxon>Mycoplasmoidales</taxon>
        <taxon>Mycoplasmoidaceae</taxon>
        <taxon>Mycoplasmoides</taxon>
    </lineage>
</organism>
<dbReference type="EMBL" id="L43967">
    <property type="protein sequence ID" value="AAC71380.1"/>
    <property type="molecule type" value="Genomic_DNA"/>
</dbReference>
<dbReference type="PIR" id="I64217">
    <property type="entry name" value="I64217"/>
</dbReference>
<dbReference type="RefSeq" id="WP_009885846.1">
    <property type="nucleotide sequence ID" value="NC_000908.2"/>
</dbReference>
<dbReference type="SMR" id="P47408"/>
<dbReference type="FunCoup" id="P47408">
    <property type="interactions" value="190"/>
</dbReference>
<dbReference type="STRING" id="243273.MG_162"/>
<dbReference type="GeneID" id="88282295"/>
<dbReference type="KEGG" id="mge:MG_162"/>
<dbReference type="eggNOG" id="COG0198">
    <property type="taxonomic scope" value="Bacteria"/>
</dbReference>
<dbReference type="HOGENOM" id="CLU_093315_2_2_14"/>
<dbReference type="InParanoid" id="P47408"/>
<dbReference type="OrthoDB" id="9807419at2"/>
<dbReference type="BioCyc" id="MGEN243273:G1GJ2-186-MONOMER"/>
<dbReference type="Proteomes" id="UP000000807">
    <property type="component" value="Chromosome"/>
</dbReference>
<dbReference type="GO" id="GO:0022625">
    <property type="term" value="C:cytosolic large ribosomal subunit"/>
    <property type="evidence" value="ECO:0000318"/>
    <property type="project" value="GO_Central"/>
</dbReference>
<dbReference type="GO" id="GO:0019843">
    <property type="term" value="F:rRNA binding"/>
    <property type="evidence" value="ECO:0007669"/>
    <property type="project" value="UniProtKB-UniRule"/>
</dbReference>
<dbReference type="GO" id="GO:0003735">
    <property type="term" value="F:structural constituent of ribosome"/>
    <property type="evidence" value="ECO:0007669"/>
    <property type="project" value="InterPro"/>
</dbReference>
<dbReference type="GO" id="GO:0006412">
    <property type="term" value="P:translation"/>
    <property type="evidence" value="ECO:0000318"/>
    <property type="project" value="GO_Central"/>
</dbReference>
<dbReference type="CDD" id="cd06089">
    <property type="entry name" value="KOW_RPL26"/>
    <property type="match status" value="1"/>
</dbReference>
<dbReference type="FunFam" id="2.30.30.30:FF:000155">
    <property type="entry name" value="50S ribosomal protein L24"/>
    <property type="match status" value="1"/>
</dbReference>
<dbReference type="Gene3D" id="2.30.30.30">
    <property type="match status" value="1"/>
</dbReference>
<dbReference type="HAMAP" id="MF_01326_B">
    <property type="entry name" value="Ribosomal_uL24_B"/>
    <property type="match status" value="1"/>
</dbReference>
<dbReference type="InterPro" id="IPR005824">
    <property type="entry name" value="KOW"/>
</dbReference>
<dbReference type="InterPro" id="IPR014722">
    <property type="entry name" value="Rib_uL2_dom2"/>
</dbReference>
<dbReference type="InterPro" id="IPR003256">
    <property type="entry name" value="Ribosomal_uL24"/>
</dbReference>
<dbReference type="InterPro" id="IPR005825">
    <property type="entry name" value="Ribosomal_uL24_CS"/>
</dbReference>
<dbReference type="InterPro" id="IPR041988">
    <property type="entry name" value="Ribosomal_uL24_KOW"/>
</dbReference>
<dbReference type="InterPro" id="IPR008991">
    <property type="entry name" value="Translation_prot_SH3-like_sf"/>
</dbReference>
<dbReference type="NCBIfam" id="TIGR01079">
    <property type="entry name" value="rplX_bact"/>
    <property type="match status" value="1"/>
</dbReference>
<dbReference type="PANTHER" id="PTHR12903">
    <property type="entry name" value="MITOCHONDRIAL RIBOSOMAL PROTEIN L24"/>
    <property type="match status" value="1"/>
</dbReference>
<dbReference type="Pfam" id="PF00467">
    <property type="entry name" value="KOW"/>
    <property type="match status" value="1"/>
</dbReference>
<dbReference type="Pfam" id="PF17136">
    <property type="entry name" value="ribosomal_L24"/>
    <property type="match status" value="1"/>
</dbReference>
<dbReference type="SMART" id="SM00739">
    <property type="entry name" value="KOW"/>
    <property type="match status" value="1"/>
</dbReference>
<dbReference type="SUPFAM" id="SSF50104">
    <property type="entry name" value="Translation proteins SH3-like domain"/>
    <property type="match status" value="1"/>
</dbReference>
<dbReference type="PROSITE" id="PS01108">
    <property type="entry name" value="RIBOSOMAL_L24"/>
    <property type="match status" value="1"/>
</dbReference>
<accession>P47408</accession>
<reference key="1">
    <citation type="journal article" date="1995" name="Science">
        <title>The minimal gene complement of Mycoplasma genitalium.</title>
        <authorList>
            <person name="Fraser C.M."/>
            <person name="Gocayne J.D."/>
            <person name="White O."/>
            <person name="Adams M.D."/>
            <person name="Clayton R.A."/>
            <person name="Fleischmann R.D."/>
            <person name="Bult C.J."/>
            <person name="Kerlavage A.R."/>
            <person name="Sutton G.G."/>
            <person name="Kelley J.M."/>
            <person name="Fritchman J.L."/>
            <person name="Weidman J.F."/>
            <person name="Small K.V."/>
            <person name="Sandusky M."/>
            <person name="Fuhrmann J.L."/>
            <person name="Nguyen D.T."/>
            <person name="Utterback T.R."/>
            <person name="Saudek D.M."/>
            <person name="Phillips C.A."/>
            <person name="Merrick J.M."/>
            <person name="Tomb J.-F."/>
            <person name="Dougherty B.A."/>
            <person name="Bott K.F."/>
            <person name="Hu P.-C."/>
            <person name="Lucier T.S."/>
            <person name="Peterson S.N."/>
            <person name="Smith H.O."/>
            <person name="Hutchison C.A. III"/>
            <person name="Venter J.C."/>
        </authorList>
    </citation>
    <scope>NUCLEOTIDE SEQUENCE [LARGE SCALE GENOMIC DNA]</scope>
    <source>
        <strain>ATCC 33530 / DSM 19775 / NCTC 10195 / G37</strain>
    </source>
</reference>
<keyword id="KW-1185">Reference proteome</keyword>
<keyword id="KW-0687">Ribonucleoprotein</keyword>
<keyword id="KW-0689">Ribosomal protein</keyword>
<keyword id="KW-0694">RNA-binding</keyword>
<keyword id="KW-0699">rRNA-binding</keyword>
<name>RL24_MYCGE</name>
<gene>
    <name evidence="1" type="primary">rplX</name>
    <name evidence="1" type="synonym">rpl24</name>
    <name type="ordered locus">MG162</name>
</gene>
<proteinExistence type="inferred from homology"/>
<comment type="function">
    <text evidence="1">One of two assembly initiator proteins, it binds directly to the 5'-end of the 23S rRNA, where it nucleates assembly of the 50S subunit.</text>
</comment>
<comment type="function">
    <text evidence="1">One of the proteins that surrounds the polypeptide exit tunnel on the outside of the subunit.</text>
</comment>
<comment type="subunit">
    <text evidence="1">Part of the 50S ribosomal subunit.</text>
</comment>
<comment type="similarity">
    <text evidence="1">Belongs to the universal ribosomal protein uL24 family.</text>
</comment>
<evidence type="ECO:0000255" key="1">
    <source>
        <dbReference type="HAMAP-Rule" id="MF_01326"/>
    </source>
</evidence>
<evidence type="ECO:0000305" key="2"/>
<feature type="chain" id="PRO_0000130678" description="Large ribosomal subunit protein uL24">
    <location>
        <begin position="1"/>
        <end position="108"/>
    </location>
</feature>